<sequence>MSDNTPWFEGIRFPMVCFSPEILREVRDKFLVKDEDTITVTYPKSGTNWLNEIVCLILSKGDPKLVQSVPNWDRSPWIEFTGGYELVKGQKDPRVYTSHLPLHLFPKSFFSSKAKVIYCIRNPRDALVSGYFFLSKMNVTEKPETLQQYMEWFLQGNVIYGSWFEHVRGWLSMREMENVLVLSYEDLIKDTRSTVEKICQFLGKKLKPEETDLVLKYSSFQFMKENEMSNFTLLPHAYTTEGFTLLRKGTVGDWKNHFTVAQAEAFDKIYQEKMAGYPPKLFSWEEC</sequence>
<accession>P50234</accession>
<gene>
    <name type="primary">STD1</name>
    <name type="synonym">STD</name>
</gene>
<dbReference type="EC" id="2.8.2.2"/>
<dbReference type="EMBL" id="U06871">
    <property type="protein sequence ID" value="AAA19588.1"/>
    <property type="molecule type" value="mRNA"/>
</dbReference>
<dbReference type="PIR" id="A54026">
    <property type="entry name" value="A54026"/>
</dbReference>
<dbReference type="RefSeq" id="NP_001166364.1">
    <property type="nucleotide sequence ID" value="NM_001172893.1"/>
</dbReference>
<dbReference type="SMR" id="P50234"/>
<dbReference type="FunCoup" id="P50234">
    <property type="interactions" value="324"/>
</dbReference>
<dbReference type="STRING" id="10141.ENSCPOP00000002750"/>
<dbReference type="GeneID" id="100379581"/>
<dbReference type="KEGG" id="cpoc:100379581"/>
<dbReference type="CTD" id="100379581"/>
<dbReference type="eggNOG" id="KOG1584">
    <property type="taxonomic scope" value="Eukaryota"/>
</dbReference>
<dbReference type="InParanoid" id="P50234"/>
<dbReference type="OrthoDB" id="205623at2759"/>
<dbReference type="Proteomes" id="UP000005447">
    <property type="component" value="Unassembled WGS sequence"/>
</dbReference>
<dbReference type="GO" id="GO:0005737">
    <property type="term" value="C:cytoplasm"/>
    <property type="evidence" value="ECO:0007669"/>
    <property type="project" value="UniProtKB-SubCell"/>
</dbReference>
<dbReference type="GO" id="GO:0004027">
    <property type="term" value="F:alcohol sulfotransferase activity"/>
    <property type="evidence" value="ECO:0007669"/>
    <property type="project" value="UniProtKB-EC"/>
</dbReference>
<dbReference type="GO" id="GO:0008202">
    <property type="term" value="P:steroid metabolic process"/>
    <property type="evidence" value="ECO:0007669"/>
    <property type="project" value="UniProtKB-KW"/>
</dbReference>
<dbReference type="FunFam" id="3.40.50.300:FF:000433">
    <property type="entry name" value="Estrogen sulfotransferase"/>
    <property type="match status" value="1"/>
</dbReference>
<dbReference type="Gene3D" id="3.40.50.300">
    <property type="entry name" value="P-loop containing nucleotide triphosphate hydrolases"/>
    <property type="match status" value="1"/>
</dbReference>
<dbReference type="InterPro" id="IPR027417">
    <property type="entry name" value="P-loop_NTPase"/>
</dbReference>
<dbReference type="InterPro" id="IPR000863">
    <property type="entry name" value="Sulfotransferase_dom"/>
</dbReference>
<dbReference type="PANTHER" id="PTHR11783">
    <property type="entry name" value="SULFOTRANSFERASE SULT"/>
    <property type="match status" value="1"/>
</dbReference>
<dbReference type="Pfam" id="PF00685">
    <property type="entry name" value="Sulfotransfer_1"/>
    <property type="match status" value="1"/>
</dbReference>
<dbReference type="SUPFAM" id="SSF52540">
    <property type="entry name" value="P-loop containing nucleoside triphosphate hydrolases"/>
    <property type="match status" value="1"/>
</dbReference>
<protein>
    <recommendedName>
        <fullName>3-alpha-hydroxysteroid sulfotransferase</fullName>
        <ecNumber>2.8.2.2</ecNumber>
    </recommendedName>
    <alternativeName>
        <fullName>Alcohol sulfotransferase</fullName>
    </alternativeName>
    <alternativeName>
        <fullName>HST1</fullName>
    </alternativeName>
</protein>
<organism>
    <name type="scientific">Cavia porcellus</name>
    <name type="common">Guinea pig</name>
    <dbReference type="NCBI Taxonomy" id="10141"/>
    <lineage>
        <taxon>Eukaryota</taxon>
        <taxon>Metazoa</taxon>
        <taxon>Chordata</taxon>
        <taxon>Craniata</taxon>
        <taxon>Vertebrata</taxon>
        <taxon>Euteleostomi</taxon>
        <taxon>Mammalia</taxon>
        <taxon>Eutheria</taxon>
        <taxon>Euarchontoglires</taxon>
        <taxon>Glires</taxon>
        <taxon>Rodentia</taxon>
        <taxon>Hystricomorpha</taxon>
        <taxon>Caviidae</taxon>
        <taxon>Cavia</taxon>
    </lineage>
</organism>
<comment type="function">
    <text>Sulfotransferase that utilizes 3'-phospho-5'-adenylyl sulfate (PAPS) as sulfonate donor to catalyze the sulfonation of 3-alpha-hydroxyl groups of neutral steroids.</text>
</comment>
<comment type="catalytic activity">
    <reaction>
        <text>an alcohol + 3'-phosphoadenylyl sulfate = an alkyl sulfate + adenosine 3',5'-bisphosphate + H(+)</text>
        <dbReference type="Rhea" id="RHEA:22552"/>
        <dbReference type="ChEBI" id="CHEBI:15378"/>
        <dbReference type="ChEBI" id="CHEBI:30879"/>
        <dbReference type="ChEBI" id="CHEBI:58339"/>
        <dbReference type="ChEBI" id="CHEBI:58343"/>
        <dbReference type="ChEBI" id="CHEBI:83414"/>
        <dbReference type="EC" id="2.8.2.2"/>
    </reaction>
</comment>
<comment type="subunit">
    <text evidence="1">Homodimer.</text>
</comment>
<comment type="subcellular location">
    <subcellularLocation>
        <location evidence="2">Cytoplasm</location>
    </subcellularLocation>
</comment>
<comment type="tissue specificity">
    <text>Adrenal gland and liver.</text>
</comment>
<comment type="similarity">
    <text evidence="2">Belongs to the sulfotransferase 1 family.</text>
</comment>
<feature type="chain" id="PRO_0000085139" description="3-alpha-hydroxysteroid sulfotransferase">
    <location>
        <begin position="1"/>
        <end position="287"/>
    </location>
</feature>
<feature type="active site" description="Proton acceptor" evidence="1">
    <location>
        <position position="99"/>
    </location>
</feature>
<feature type="binding site" evidence="1">
    <location>
        <begin position="44"/>
        <end position="49"/>
    </location>
    <ligand>
        <name>3'-phosphoadenylyl sulfate</name>
        <dbReference type="ChEBI" id="CHEBI:58339"/>
    </ligand>
</feature>
<feature type="binding site" evidence="1">
    <location>
        <position position="72"/>
    </location>
    <ligand>
        <name>substrate</name>
    </ligand>
</feature>
<feature type="binding site" evidence="1">
    <location>
        <position position="77"/>
    </location>
    <ligand>
        <name>substrate</name>
    </ligand>
</feature>
<feature type="binding site" evidence="1">
    <location>
        <position position="121"/>
    </location>
    <ligand>
        <name>3'-phosphoadenylyl sulfate</name>
        <dbReference type="ChEBI" id="CHEBI:58339"/>
    </ligand>
</feature>
<feature type="binding site" evidence="1">
    <location>
        <position position="129"/>
    </location>
    <ligand>
        <name>3'-phosphoadenylyl sulfate</name>
        <dbReference type="ChEBI" id="CHEBI:58339"/>
    </ligand>
</feature>
<feature type="binding site" evidence="1">
    <location>
        <position position="184"/>
    </location>
    <ligand>
        <name>3'-phosphoadenylyl sulfate</name>
        <dbReference type="ChEBI" id="CHEBI:58339"/>
    </ligand>
</feature>
<feature type="binding site" evidence="1">
    <location>
        <begin position="218"/>
        <end position="223"/>
    </location>
    <ligand>
        <name>3'-phosphoadenylyl sulfate</name>
        <dbReference type="ChEBI" id="CHEBI:58339"/>
    </ligand>
</feature>
<feature type="binding site" evidence="1">
    <location>
        <begin position="247"/>
        <end position="249"/>
    </location>
    <ligand>
        <name>3'-phosphoadenylyl sulfate</name>
        <dbReference type="ChEBI" id="CHEBI:58339"/>
    </ligand>
</feature>
<reference key="1">
    <citation type="journal article" date="1994" name="J. Biol. Chem.">
        <title>Molecular cloning of a chiral-specific 3 alpha-hydroxysteroid sulfotransferase.</title>
        <authorList>
            <person name="Lee Y.C."/>
            <person name="Park C.-S."/>
            <person name="Strott C.A."/>
        </authorList>
    </citation>
    <scope>NUCLEOTIDE SEQUENCE [MRNA]</scope>
    <source>
        <strain>NIH 2</strain>
        <tissue>Adrenal gland</tissue>
    </source>
</reference>
<keyword id="KW-0963">Cytoplasm</keyword>
<keyword id="KW-0443">Lipid metabolism</keyword>
<keyword id="KW-1185">Reference proteome</keyword>
<keyword id="KW-0753">Steroid metabolism</keyword>
<keyword id="KW-0808">Transferase</keyword>
<name>SUHA_CAVPO</name>
<proteinExistence type="evidence at transcript level"/>
<evidence type="ECO:0000250" key="1"/>
<evidence type="ECO:0000305" key="2"/>